<gene>
    <name type="primary">RABA1H</name>
    <name type="ordered locus">At2g33870</name>
    <name type="ORF">T1B8.16</name>
</gene>
<keyword id="KW-1003">Cell membrane</keyword>
<keyword id="KW-0342">GTP-binding</keyword>
<keyword id="KW-0449">Lipoprotein</keyword>
<keyword id="KW-0472">Membrane</keyword>
<keyword id="KW-0547">Nucleotide-binding</keyword>
<keyword id="KW-0636">Prenylation</keyword>
<keyword id="KW-0653">Protein transport</keyword>
<keyword id="KW-1185">Reference proteome</keyword>
<keyword id="KW-0813">Transport</keyword>
<dbReference type="EMBL" id="U78721">
    <property type="protein sequence ID" value="AAC69136.1"/>
    <property type="molecule type" value="Genomic_DNA"/>
</dbReference>
<dbReference type="EMBL" id="CP002685">
    <property type="protein sequence ID" value="AEC08901.1"/>
    <property type="molecule type" value="Genomic_DNA"/>
</dbReference>
<dbReference type="EMBL" id="DQ446594">
    <property type="protein sequence ID" value="ABE65883.1"/>
    <property type="molecule type" value="mRNA"/>
</dbReference>
<dbReference type="PIR" id="F84750">
    <property type="entry name" value="F84750"/>
</dbReference>
<dbReference type="RefSeq" id="NP_180943.4">
    <property type="nucleotide sequence ID" value="NM_128947.5"/>
</dbReference>
<dbReference type="SMR" id="Q1PEX3"/>
<dbReference type="FunCoup" id="Q1PEX3">
    <property type="interactions" value="2830"/>
</dbReference>
<dbReference type="STRING" id="3702.Q1PEX3"/>
<dbReference type="PaxDb" id="3702-AT2G33870.1"/>
<dbReference type="ProteomicsDB" id="236555"/>
<dbReference type="EnsemblPlants" id="AT2G33870.1">
    <property type="protein sequence ID" value="AT2G33870.1"/>
    <property type="gene ID" value="AT2G33870"/>
</dbReference>
<dbReference type="GeneID" id="817957"/>
<dbReference type="Gramene" id="AT2G33870.1">
    <property type="protein sequence ID" value="AT2G33870.1"/>
    <property type="gene ID" value="AT2G33870"/>
</dbReference>
<dbReference type="KEGG" id="ath:AT2G33870"/>
<dbReference type="Araport" id="AT2G33870"/>
<dbReference type="TAIR" id="AT2G33870">
    <property type="gene designation" value="ARRABA1H"/>
</dbReference>
<dbReference type="eggNOG" id="KOG0087">
    <property type="taxonomic scope" value="Eukaryota"/>
</dbReference>
<dbReference type="HOGENOM" id="CLU_041217_23_0_1"/>
<dbReference type="InParanoid" id="Q1PEX3"/>
<dbReference type="OMA" id="QTIHIGN"/>
<dbReference type="OrthoDB" id="9989112at2759"/>
<dbReference type="PhylomeDB" id="Q1PEX3"/>
<dbReference type="PRO" id="PR:Q1PEX3"/>
<dbReference type="Proteomes" id="UP000006548">
    <property type="component" value="Chromosome 2"/>
</dbReference>
<dbReference type="ExpressionAtlas" id="Q1PEX3">
    <property type="expression patterns" value="baseline and differential"/>
</dbReference>
<dbReference type="GO" id="GO:0005886">
    <property type="term" value="C:plasma membrane"/>
    <property type="evidence" value="ECO:0007669"/>
    <property type="project" value="UniProtKB-SubCell"/>
</dbReference>
<dbReference type="GO" id="GO:0005525">
    <property type="term" value="F:GTP binding"/>
    <property type="evidence" value="ECO:0007669"/>
    <property type="project" value="UniProtKB-KW"/>
</dbReference>
<dbReference type="GO" id="GO:0003924">
    <property type="term" value="F:GTPase activity"/>
    <property type="evidence" value="ECO:0007669"/>
    <property type="project" value="InterPro"/>
</dbReference>
<dbReference type="GO" id="GO:0015031">
    <property type="term" value="P:protein transport"/>
    <property type="evidence" value="ECO:0007669"/>
    <property type="project" value="UniProtKB-KW"/>
</dbReference>
<dbReference type="CDD" id="cd01868">
    <property type="entry name" value="Rab11_like"/>
    <property type="match status" value="1"/>
</dbReference>
<dbReference type="FunFam" id="3.40.50.300:FF:000067">
    <property type="entry name" value="ras-related protein RABA1f"/>
    <property type="match status" value="1"/>
</dbReference>
<dbReference type="Gene3D" id="3.40.50.300">
    <property type="entry name" value="P-loop containing nucleotide triphosphate hydrolases"/>
    <property type="match status" value="1"/>
</dbReference>
<dbReference type="InterPro" id="IPR027417">
    <property type="entry name" value="P-loop_NTPase"/>
</dbReference>
<dbReference type="InterPro" id="IPR050209">
    <property type="entry name" value="Rab_GTPases_membrane_traffic"/>
</dbReference>
<dbReference type="InterPro" id="IPR005225">
    <property type="entry name" value="Small_GTP-bd"/>
</dbReference>
<dbReference type="InterPro" id="IPR001806">
    <property type="entry name" value="Small_GTPase"/>
</dbReference>
<dbReference type="NCBIfam" id="TIGR00231">
    <property type="entry name" value="small_GTP"/>
    <property type="match status" value="1"/>
</dbReference>
<dbReference type="PANTHER" id="PTHR47979">
    <property type="entry name" value="DRAB11-RELATED"/>
    <property type="match status" value="1"/>
</dbReference>
<dbReference type="Pfam" id="PF00071">
    <property type="entry name" value="Ras"/>
    <property type="match status" value="1"/>
</dbReference>
<dbReference type="PRINTS" id="PR00449">
    <property type="entry name" value="RASTRNSFRMNG"/>
</dbReference>
<dbReference type="SMART" id="SM00175">
    <property type="entry name" value="RAB"/>
    <property type="match status" value="1"/>
</dbReference>
<dbReference type="SMART" id="SM00176">
    <property type="entry name" value="RAN"/>
    <property type="match status" value="1"/>
</dbReference>
<dbReference type="SMART" id="SM00173">
    <property type="entry name" value="RAS"/>
    <property type="match status" value="1"/>
</dbReference>
<dbReference type="SMART" id="SM00174">
    <property type="entry name" value="RHO"/>
    <property type="match status" value="1"/>
</dbReference>
<dbReference type="SUPFAM" id="SSF52540">
    <property type="entry name" value="P-loop containing nucleoside triphosphate hydrolases"/>
    <property type="match status" value="1"/>
</dbReference>
<dbReference type="PROSITE" id="PS51419">
    <property type="entry name" value="RAB"/>
    <property type="match status" value="1"/>
</dbReference>
<sequence length="218" mass="24337">MGTYKAEDDYDYLFKVVLTGDSGVGKSNLLSRFTRNDFSHDSRSTIGVEFATRSIQVDDKIVKAQIWDTAGQERYRAITSAYYRGAVGALLVYDVTRHVTFENVERWLKELRDHTDANTVIMLVGNKADLNHLRAISTEEVKDFAERENTFFMETSALEAINVENAFTEVLTQIYRVVSKKALDAGDDPTTALPKGQMINVGSRDDVSAVKKSGCCAT</sequence>
<name>RAA1H_ARATH</name>
<organism>
    <name type="scientific">Arabidopsis thaliana</name>
    <name type="common">Mouse-ear cress</name>
    <dbReference type="NCBI Taxonomy" id="3702"/>
    <lineage>
        <taxon>Eukaryota</taxon>
        <taxon>Viridiplantae</taxon>
        <taxon>Streptophyta</taxon>
        <taxon>Embryophyta</taxon>
        <taxon>Tracheophyta</taxon>
        <taxon>Spermatophyta</taxon>
        <taxon>Magnoliopsida</taxon>
        <taxon>eudicotyledons</taxon>
        <taxon>Gunneridae</taxon>
        <taxon>Pentapetalae</taxon>
        <taxon>rosids</taxon>
        <taxon>malvids</taxon>
        <taxon>Brassicales</taxon>
        <taxon>Brassicaceae</taxon>
        <taxon>Camelineae</taxon>
        <taxon>Arabidopsis</taxon>
    </lineage>
</organism>
<proteinExistence type="evidence at transcript level"/>
<accession>Q1PEX3</accession>
<accession>P93020</accession>
<protein>
    <recommendedName>
        <fullName>Ras-related protein RABA1h</fullName>
        <shortName>AtRABA1h</shortName>
    </recommendedName>
</protein>
<reference key="1">
    <citation type="journal article" date="1999" name="Nature">
        <title>Sequence and analysis of chromosome 2 of the plant Arabidopsis thaliana.</title>
        <authorList>
            <person name="Lin X."/>
            <person name="Kaul S."/>
            <person name="Rounsley S.D."/>
            <person name="Shea T.P."/>
            <person name="Benito M.-I."/>
            <person name="Town C.D."/>
            <person name="Fujii C.Y."/>
            <person name="Mason T.M."/>
            <person name="Bowman C.L."/>
            <person name="Barnstead M.E."/>
            <person name="Feldblyum T.V."/>
            <person name="Buell C.R."/>
            <person name="Ketchum K.A."/>
            <person name="Lee J.J."/>
            <person name="Ronning C.M."/>
            <person name="Koo H.L."/>
            <person name="Moffat K.S."/>
            <person name="Cronin L.A."/>
            <person name="Shen M."/>
            <person name="Pai G."/>
            <person name="Van Aken S."/>
            <person name="Umayam L."/>
            <person name="Tallon L.J."/>
            <person name="Gill J.E."/>
            <person name="Adams M.D."/>
            <person name="Carrera A.J."/>
            <person name="Creasy T.H."/>
            <person name="Goodman H.M."/>
            <person name="Somerville C.R."/>
            <person name="Copenhaver G.P."/>
            <person name="Preuss D."/>
            <person name="Nierman W.C."/>
            <person name="White O."/>
            <person name="Eisen J.A."/>
            <person name="Salzberg S.L."/>
            <person name="Fraser C.M."/>
            <person name="Venter J.C."/>
        </authorList>
    </citation>
    <scope>NUCLEOTIDE SEQUENCE [LARGE SCALE GENOMIC DNA]</scope>
    <source>
        <strain>cv. Columbia</strain>
    </source>
</reference>
<reference key="2">
    <citation type="journal article" date="2017" name="Plant J.">
        <title>Araport11: a complete reannotation of the Arabidopsis thaliana reference genome.</title>
        <authorList>
            <person name="Cheng C.Y."/>
            <person name="Krishnakumar V."/>
            <person name="Chan A.P."/>
            <person name="Thibaud-Nissen F."/>
            <person name="Schobel S."/>
            <person name="Town C.D."/>
        </authorList>
    </citation>
    <scope>GENOME REANNOTATION</scope>
    <source>
        <strain>cv. Columbia</strain>
    </source>
</reference>
<reference key="3">
    <citation type="journal article" date="2006" name="Plant Biotechnol. J.">
        <title>Simultaneous high-throughput recombinational cloning of open reading frames in closed and open configurations.</title>
        <authorList>
            <person name="Underwood B.A."/>
            <person name="Vanderhaeghen R."/>
            <person name="Whitford R."/>
            <person name="Town C.D."/>
            <person name="Hilson P."/>
        </authorList>
    </citation>
    <scope>NUCLEOTIDE SEQUENCE [LARGE SCALE MRNA]</scope>
    <source>
        <strain>cv. Columbia</strain>
    </source>
</reference>
<reference key="4">
    <citation type="journal article" date="2003" name="Plant Physiol.">
        <title>Analysis of the small GTPase gene superfamily of Arabidopsis.</title>
        <authorList>
            <person name="Vernoud V."/>
            <person name="Horton A.C."/>
            <person name="Yang Z."/>
            <person name="Nielsen E."/>
        </authorList>
    </citation>
    <scope>GENE FAMILY</scope>
    <scope>NOMENCLATURE</scope>
</reference>
<feature type="chain" id="PRO_0000407339" description="Ras-related protein RABA1h">
    <location>
        <begin position="1"/>
        <end position="218"/>
    </location>
</feature>
<feature type="short sequence motif" description="Effector region" evidence="1">
    <location>
        <begin position="42"/>
        <end position="50"/>
    </location>
</feature>
<feature type="binding site" evidence="1">
    <location>
        <begin position="20"/>
        <end position="27"/>
    </location>
    <ligand>
        <name>GTP</name>
        <dbReference type="ChEBI" id="CHEBI:37565"/>
    </ligand>
</feature>
<feature type="binding site" evidence="1">
    <location>
        <begin position="68"/>
        <end position="72"/>
    </location>
    <ligand>
        <name>GTP</name>
        <dbReference type="ChEBI" id="CHEBI:37565"/>
    </ligand>
</feature>
<feature type="binding site" evidence="1">
    <location>
        <begin position="126"/>
        <end position="129"/>
    </location>
    <ligand>
        <name>GTP</name>
        <dbReference type="ChEBI" id="CHEBI:37565"/>
    </ligand>
</feature>
<feature type="binding site" evidence="1">
    <location>
        <begin position="156"/>
        <end position="157"/>
    </location>
    <ligand>
        <name>GTP</name>
        <dbReference type="ChEBI" id="CHEBI:37565"/>
    </ligand>
</feature>
<feature type="lipid moiety-binding region" description="S-geranylgeranyl cysteine" evidence="1">
    <location>
        <position position="215"/>
    </location>
</feature>
<feature type="lipid moiety-binding region" description="S-geranylgeranyl cysteine" evidence="1">
    <location>
        <position position="216"/>
    </location>
</feature>
<feature type="sequence conflict" description="In Ref. 1; AAC69136." evidence="2" ref="1">
    <original>S</original>
    <variation>RG</variation>
    <location>
        <position position="54"/>
    </location>
</feature>
<comment type="function">
    <text evidence="1">Intracellular vesicle trafficking and protein transport.</text>
</comment>
<comment type="subcellular location">
    <subcellularLocation>
        <location evidence="2">Cell membrane</location>
        <topology evidence="2">Lipid-anchor</topology>
        <orientation evidence="2">Cytoplasmic side</orientation>
    </subcellularLocation>
</comment>
<comment type="similarity">
    <text evidence="2">Belongs to the small GTPase superfamily. Rab family.</text>
</comment>
<evidence type="ECO:0000250" key="1"/>
<evidence type="ECO:0000305" key="2"/>